<comment type="function">
    <text evidence="1">NDH-1 shuttles electrons from NADH, via FMN and iron-sulfur (Fe-S) centers, to quinones in the respiratory chain. The immediate electron acceptor for the enzyme in this species is believed to be ubiquinone. Couples the redox reaction to proton translocation (for every two electrons transferred, four hydrogen ions are translocated across the cytoplasmic membrane), and thus conserves the redox energy in a proton gradient.</text>
</comment>
<comment type="catalytic activity">
    <reaction evidence="1">
        <text>a quinone + NADH + 5 H(+)(in) = a quinol + NAD(+) + 4 H(+)(out)</text>
        <dbReference type="Rhea" id="RHEA:57888"/>
        <dbReference type="ChEBI" id="CHEBI:15378"/>
        <dbReference type="ChEBI" id="CHEBI:24646"/>
        <dbReference type="ChEBI" id="CHEBI:57540"/>
        <dbReference type="ChEBI" id="CHEBI:57945"/>
        <dbReference type="ChEBI" id="CHEBI:132124"/>
    </reaction>
</comment>
<comment type="cofactor">
    <cofactor evidence="1">
        <name>[4Fe-4S] cluster</name>
        <dbReference type="ChEBI" id="CHEBI:49883"/>
    </cofactor>
    <text evidence="1">Binds 1 [4Fe-4S] cluster.</text>
</comment>
<comment type="subunit">
    <text evidence="1">NDH-1 is composed of 14 different subunits. Subunits NuoB, C, D, E, F, and G constitute the peripheral sector of the complex.</text>
</comment>
<comment type="subcellular location">
    <subcellularLocation>
        <location evidence="1">Cell inner membrane</location>
        <topology evidence="1">Peripheral membrane protein</topology>
        <orientation evidence="1">Cytoplasmic side</orientation>
    </subcellularLocation>
</comment>
<comment type="similarity">
    <text evidence="1">Belongs to the complex I 20 kDa subunit family.</text>
</comment>
<organism>
    <name type="scientific">Sulfurimonas denitrificans (strain ATCC 33889 / DSM 1251)</name>
    <name type="common">Thiomicrospira denitrificans (strain ATCC 33889 / DSM 1251)</name>
    <dbReference type="NCBI Taxonomy" id="326298"/>
    <lineage>
        <taxon>Bacteria</taxon>
        <taxon>Pseudomonadati</taxon>
        <taxon>Campylobacterota</taxon>
        <taxon>Epsilonproteobacteria</taxon>
        <taxon>Campylobacterales</taxon>
        <taxon>Sulfurimonadaceae</taxon>
        <taxon>Sulfurimonas</taxon>
    </lineage>
</organism>
<feature type="chain" id="PRO_0000376392" description="NADH-quinone oxidoreductase subunit B">
    <location>
        <begin position="1"/>
        <end position="169"/>
    </location>
</feature>
<feature type="binding site" evidence="1">
    <location>
        <position position="42"/>
    </location>
    <ligand>
        <name>[4Fe-4S] cluster</name>
        <dbReference type="ChEBI" id="CHEBI:49883"/>
    </ligand>
</feature>
<feature type="binding site" evidence="1">
    <location>
        <position position="43"/>
    </location>
    <ligand>
        <name>[4Fe-4S] cluster</name>
        <dbReference type="ChEBI" id="CHEBI:49883"/>
    </ligand>
</feature>
<feature type="binding site" evidence="1">
    <location>
        <position position="107"/>
    </location>
    <ligand>
        <name>[4Fe-4S] cluster</name>
        <dbReference type="ChEBI" id="CHEBI:49883"/>
    </ligand>
</feature>
<feature type="binding site" evidence="1">
    <location>
        <position position="136"/>
    </location>
    <ligand>
        <name>[4Fe-4S] cluster</name>
        <dbReference type="ChEBI" id="CHEBI:49883"/>
    </ligand>
</feature>
<sequence>MAQHKINYTQNGGLPVALTSIDKIVNWGRSNSLWAMTYGLACCGIEMMASGASRYDFDRFGTIFRASPRQSDVMIVAGTLTKKHAEFIKRLYDQMTEPKWVISMGSCANTGGMFNTYATVQGVDRIIPVDLYLPGCAPRPETLQYGVMLLQKKIRANKASRAQVAKRLM</sequence>
<accession>Q30PH9</accession>
<evidence type="ECO:0000255" key="1">
    <source>
        <dbReference type="HAMAP-Rule" id="MF_01356"/>
    </source>
</evidence>
<name>NUOB_SULDN</name>
<protein>
    <recommendedName>
        <fullName evidence="1">NADH-quinone oxidoreductase subunit B</fullName>
        <ecNumber evidence="1">7.1.1.-</ecNumber>
    </recommendedName>
    <alternativeName>
        <fullName evidence="1">NADH dehydrogenase I subunit B</fullName>
    </alternativeName>
    <alternativeName>
        <fullName evidence="1">NDH-1 subunit B</fullName>
    </alternativeName>
</protein>
<gene>
    <name evidence="1" type="primary">nuoB</name>
    <name type="ordered locus">Suden_1828</name>
</gene>
<proteinExistence type="inferred from homology"/>
<dbReference type="EC" id="7.1.1.-" evidence="1"/>
<dbReference type="EMBL" id="CP000153">
    <property type="protein sequence ID" value="ABB45102.1"/>
    <property type="molecule type" value="Genomic_DNA"/>
</dbReference>
<dbReference type="RefSeq" id="WP_011373442.1">
    <property type="nucleotide sequence ID" value="NC_007575.1"/>
</dbReference>
<dbReference type="SMR" id="Q30PH9"/>
<dbReference type="STRING" id="326298.Suden_1828"/>
<dbReference type="KEGG" id="tdn:Suden_1828"/>
<dbReference type="eggNOG" id="COG0377">
    <property type="taxonomic scope" value="Bacteria"/>
</dbReference>
<dbReference type="HOGENOM" id="CLU_055737_7_3_7"/>
<dbReference type="OrthoDB" id="9786737at2"/>
<dbReference type="Proteomes" id="UP000002714">
    <property type="component" value="Chromosome"/>
</dbReference>
<dbReference type="GO" id="GO:0005886">
    <property type="term" value="C:plasma membrane"/>
    <property type="evidence" value="ECO:0007669"/>
    <property type="project" value="UniProtKB-SubCell"/>
</dbReference>
<dbReference type="GO" id="GO:0045271">
    <property type="term" value="C:respiratory chain complex I"/>
    <property type="evidence" value="ECO:0007669"/>
    <property type="project" value="TreeGrafter"/>
</dbReference>
<dbReference type="GO" id="GO:0051539">
    <property type="term" value="F:4 iron, 4 sulfur cluster binding"/>
    <property type="evidence" value="ECO:0007669"/>
    <property type="project" value="UniProtKB-KW"/>
</dbReference>
<dbReference type="GO" id="GO:0005506">
    <property type="term" value="F:iron ion binding"/>
    <property type="evidence" value="ECO:0007669"/>
    <property type="project" value="UniProtKB-UniRule"/>
</dbReference>
<dbReference type="GO" id="GO:0008137">
    <property type="term" value="F:NADH dehydrogenase (ubiquinone) activity"/>
    <property type="evidence" value="ECO:0007669"/>
    <property type="project" value="InterPro"/>
</dbReference>
<dbReference type="GO" id="GO:0050136">
    <property type="term" value="F:NADH:ubiquinone reductase (non-electrogenic) activity"/>
    <property type="evidence" value="ECO:0007669"/>
    <property type="project" value="UniProtKB-UniRule"/>
</dbReference>
<dbReference type="GO" id="GO:0048038">
    <property type="term" value="F:quinone binding"/>
    <property type="evidence" value="ECO:0007669"/>
    <property type="project" value="UniProtKB-KW"/>
</dbReference>
<dbReference type="GO" id="GO:0009060">
    <property type="term" value="P:aerobic respiration"/>
    <property type="evidence" value="ECO:0007669"/>
    <property type="project" value="TreeGrafter"/>
</dbReference>
<dbReference type="GO" id="GO:0015990">
    <property type="term" value="P:electron transport coupled proton transport"/>
    <property type="evidence" value="ECO:0007669"/>
    <property type="project" value="TreeGrafter"/>
</dbReference>
<dbReference type="FunFam" id="3.40.50.12280:FF:000002">
    <property type="entry name" value="NADH-quinone oxidoreductase subunit B"/>
    <property type="match status" value="1"/>
</dbReference>
<dbReference type="Gene3D" id="3.40.50.12280">
    <property type="match status" value="1"/>
</dbReference>
<dbReference type="HAMAP" id="MF_01356">
    <property type="entry name" value="NDH1_NuoB"/>
    <property type="match status" value="1"/>
</dbReference>
<dbReference type="InterPro" id="IPR006137">
    <property type="entry name" value="NADH_UbQ_OxRdtase-like_20kDa"/>
</dbReference>
<dbReference type="InterPro" id="IPR006138">
    <property type="entry name" value="NADH_UQ_OxRdtase_20Kd_su"/>
</dbReference>
<dbReference type="NCBIfam" id="TIGR01957">
    <property type="entry name" value="nuoB_fam"/>
    <property type="match status" value="1"/>
</dbReference>
<dbReference type="NCBIfam" id="NF005012">
    <property type="entry name" value="PRK06411.1"/>
    <property type="match status" value="1"/>
</dbReference>
<dbReference type="PANTHER" id="PTHR11995">
    <property type="entry name" value="NADH DEHYDROGENASE"/>
    <property type="match status" value="1"/>
</dbReference>
<dbReference type="PANTHER" id="PTHR11995:SF14">
    <property type="entry name" value="NADH DEHYDROGENASE [UBIQUINONE] IRON-SULFUR PROTEIN 7, MITOCHONDRIAL"/>
    <property type="match status" value="1"/>
</dbReference>
<dbReference type="Pfam" id="PF01058">
    <property type="entry name" value="Oxidored_q6"/>
    <property type="match status" value="1"/>
</dbReference>
<dbReference type="SUPFAM" id="SSF56770">
    <property type="entry name" value="HydA/Nqo6-like"/>
    <property type="match status" value="1"/>
</dbReference>
<reference key="1">
    <citation type="journal article" date="2008" name="Appl. Environ. Microbiol.">
        <title>Genome of the epsilonproteobacterial chemolithoautotroph Sulfurimonas denitrificans.</title>
        <authorList>
            <person name="Sievert S.M."/>
            <person name="Scott K.M."/>
            <person name="Klotz M.G."/>
            <person name="Chain P.S.G."/>
            <person name="Hauser L.J."/>
            <person name="Hemp J."/>
            <person name="Huegler M."/>
            <person name="Land M."/>
            <person name="Lapidus A."/>
            <person name="Larimer F.W."/>
            <person name="Lucas S."/>
            <person name="Malfatti S.A."/>
            <person name="Meyer F."/>
            <person name="Paulsen I.T."/>
            <person name="Ren Q."/>
            <person name="Simon J."/>
            <person name="Bailey K."/>
            <person name="Diaz E."/>
            <person name="Fitzpatrick K.A."/>
            <person name="Glover B."/>
            <person name="Gwatney N."/>
            <person name="Korajkic A."/>
            <person name="Long A."/>
            <person name="Mobberley J.M."/>
            <person name="Pantry S.N."/>
            <person name="Pazder G."/>
            <person name="Peterson S."/>
            <person name="Quintanilla J.D."/>
            <person name="Sprinkle R."/>
            <person name="Stephens J."/>
            <person name="Thomas P."/>
            <person name="Vaughn R."/>
            <person name="Weber M.J."/>
            <person name="Wooten L.L."/>
        </authorList>
    </citation>
    <scope>NUCLEOTIDE SEQUENCE [LARGE SCALE GENOMIC DNA]</scope>
    <source>
        <strain>ATCC 33889 / DSM 1251</strain>
    </source>
</reference>
<keyword id="KW-0004">4Fe-4S</keyword>
<keyword id="KW-0997">Cell inner membrane</keyword>
<keyword id="KW-1003">Cell membrane</keyword>
<keyword id="KW-0408">Iron</keyword>
<keyword id="KW-0411">Iron-sulfur</keyword>
<keyword id="KW-0472">Membrane</keyword>
<keyword id="KW-0479">Metal-binding</keyword>
<keyword id="KW-0520">NAD</keyword>
<keyword id="KW-0874">Quinone</keyword>
<keyword id="KW-1185">Reference proteome</keyword>
<keyword id="KW-1278">Translocase</keyword>
<keyword id="KW-0813">Transport</keyword>
<keyword id="KW-0830">Ubiquinone</keyword>